<name>RR12_AMBTC</name>
<geneLocation type="chloroplast"/>
<proteinExistence type="inferred from homology"/>
<comment type="function">
    <text evidence="1">With S4 and S5 plays an important role in translational accuracy. Located at the interface of the 30S and 50S subunits (By similarity).</text>
</comment>
<comment type="subunit">
    <text evidence="1">Part of the 30S ribosomal subunit.</text>
</comment>
<comment type="subcellular location">
    <subcellularLocation>
        <location>Plastid</location>
        <location>Chloroplast</location>
    </subcellularLocation>
</comment>
<comment type="similarity">
    <text evidence="2">Belongs to the universal ribosomal protein uS12 family.</text>
</comment>
<accession>Q70XU7</accession>
<reference key="1">
    <citation type="journal article" date="2003" name="Mol. Biol. Evol.">
        <title>Analysis of the Amborella trichopoda chloroplast genome sequence suggests that Amborella is not a basal angiosperm.</title>
        <authorList>
            <person name="Goremykin V.V."/>
            <person name="Hirsch-Ernst K.I."/>
            <person name="Wolfl S."/>
            <person name="Hellwig F.H."/>
        </authorList>
    </citation>
    <scope>NUCLEOTIDE SEQUENCE [LARGE SCALE GENOMIC DNA]</scope>
</reference>
<gene>
    <name type="primary">rps12</name>
</gene>
<protein>
    <recommendedName>
        <fullName evidence="2">Small ribosomal subunit protein uS12c</fullName>
    </recommendedName>
    <alternativeName>
        <fullName>30S ribosomal protein S12, chloroplastic</fullName>
    </alternativeName>
</protein>
<keyword id="KW-0150">Chloroplast</keyword>
<keyword id="KW-0934">Plastid</keyword>
<keyword id="KW-1185">Reference proteome</keyword>
<keyword id="KW-0687">Ribonucleoprotein</keyword>
<keyword id="KW-0689">Ribosomal protein</keyword>
<keyword id="KW-0694">RNA-binding</keyword>
<keyword id="KW-0699">rRNA-binding</keyword>
<evidence type="ECO:0000250" key="1"/>
<evidence type="ECO:0000305" key="2"/>
<dbReference type="EMBL" id="AJ506156">
    <property type="protein sequence ID" value="CAD45130.1"/>
    <property type="molecule type" value="Genomic_DNA"/>
</dbReference>
<dbReference type="RefSeq" id="NP_904078.1">
    <property type="nucleotide sequence ID" value="NC_005086.1"/>
</dbReference>
<dbReference type="SMR" id="Q70XU7"/>
<dbReference type="STRING" id="13333.Q70XU7"/>
<dbReference type="GeneID" id="2546505"/>
<dbReference type="KEGG" id="atr:2546505"/>
<dbReference type="eggNOG" id="KOG1750">
    <property type="taxonomic scope" value="Eukaryota"/>
</dbReference>
<dbReference type="OrthoDB" id="414309at2759"/>
<dbReference type="Proteomes" id="UP000017836">
    <property type="component" value="Chloroplast"/>
</dbReference>
<dbReference type="GO" id="GO:0009507">
    <property type="term" value="C:chloroplast"/>
    <property type="evidence" value="ECO:0007669"/>
    <property type="project" value="UniProtKB-SubCell"/>
</dbReference>
<dbReference type="GO" id="GO:0005840">
    <property type="term" value="C:ribosome"/>
    <property type="evidence" value="ECO:0000318"/>
    <property type="project" value="GO_Central"/>
</dbReference>
<dbReference type="GO" id="GO:0015935">
    <property type="term" value="C:small ribosomal subunit"/>
    <property type="evidence" value="ECO:0007669"/>
    <property type="project" value="InterPro"/>
</dbReference>
<dbReference type="GO" id="GO:0019843">
    <property type="term" value="F:rRNA binding"/>
    <property type="evidence" value="ECO:0007669"/>
    <property type="project" value="UniProtKB-UniRule"/>
</dbReference>
<dbReference type="GO" id="GO:0003735">
    <property type="term" value="F:structural constituent of ribosome"/>
    <property type="evidence" value="ECO:0000318"/>
    <property type="project" value="GO_Central"/>
</dbReference>
<dbReference type="GO" id="GO:0006412">
    <property type="term" value="P:translation"/>
    <property type="evidence" value="ECO:0000318"/>
    <property type="project" value="GO_Central"/>
</dbReference>
<dbReference type="CDD" id="cd03368">
    <property type="entry name" value="Ribosomal_S12"/>
    <property type="match status" value="1"/>
</dbReference>
<dbReference type="FunFam" id="2.40.50.140:FF:000008">
    <property type="entry name" value="30S ribosomal protein S12, chloroplastic"/>
    <property type="match status" value="1"/>
</dbReference>
<dbReference type="Gene3D" id="2.40.50.140">
    <property type="entry name" value="Nucleic acid-binding proteins"/>
    <property type="match status" value="1"/>
</dbReference>
<dbReference type="HAMAP" id="MF_00403_B">
    <property type="entry name" value="Ribosomal_uS12_B"/>
    <property type="match status" value="1"/>
</dbReference>
<dbReference type="InterPro" id="IPR012340">
    <property type="entry name" value="NA-bd_OB-fold"/>
</dbReference>
<dbReference type="InterPro" id="IPR006032">
    <property type="entry name" value="Ribosomal_uS12"/>
</dbReference>
<dbReference type="InterPro" id="IPR005679">
    <property type="entry name" value="Ribosomal_uS12_bac"/>
</dbReference>
<dbReference type="NCBIfam" id="TIGR00981">
    <property type="entry name" value="rpsL_bact"/>
    <property type="match status" value="1"/>
</dbReference>
<dbReference type="PANTHER" id="PTHR11652">
    <property type="entry name" value="30S RIBOSOMAL PROTEIN S12 FAMILY MEMBER"/>
    <property type="match status" value="1"/>
</dbReference>
<dbReference type="Pfam" id="PF00164">
    <property type="entry name" value="Ribosom_S12_S23"/>
    <property type="match status" value="1"/>
</dbReference>
<dbReference type="PIRSF" id="PIRSF002133">
    <property type="entry name" value="Ribosomal_S12/S23"/>
    <property type="match status" value="1"/>
</dbReference>
<dbReference type="PRINTS" id="PR01034">
    <property type="entry name" value="RIBOSOMALS12"/>
</dbReference>
<dbReference type="SUPFAM" id="SSF50249">
    <property type="entry name" value="Nucleic acid-binding proteins"/>
    <property type="match status" value="1"/>
</dbReference>
<dbReference type="PROSITE" id="PS00055">
    <property type="entry name" value="RIBOSOMAL_S12"/>
    <property type="match status" value="1"/>
</dbReference>
<feature type="chain" id="PRO_0000146389" description="Small ribosomal subunit protein uS12c">
    <location>
        <begin position="1"/>
        <end position="123"/>
    </location>
</feature>
<organism>
    <name type="scientific">Amborella trichopoda</name>
    <dbReference type="NCBI Taxonomy" id="13333"/>
    <lineage>
        <taxon>Eukaryota</taxon>
        <taxon>Viridiplantae</taxon>
        <taxon>Streptophyta</taxon>
        <taxon>Embryophyta</taxon>
        <taxon>Tracheophyta</taxon>
        <taxon>Spermatophyta</taxon>
        <taxon>Magnoliopsida</taxon>
        <taxon>Amborellales</taxon>
        <taxon>Amborellaceae</taxon>
        <taxon>Amborella</taxon>
    </lineage>
</organism>
<sequence>MPTIKQLIRNTRQPIRNVTKSPALRGCPQRRGTCTRVYTITPKKPNSALRKVARVRLTSGFEITAYIPGIGHNSQEHSVVLVRGGRVKDLPGVRYHIVRGTLDAVGVKDRQQGRSKYGVKKPK</sequence>